<feature type="chain" id="PRO_1000204987" description="Trigger factor">
    <location>
        <begin position="1"/>
        <end position="433"/>
    </location>
</feature>
<feature type="domain" description="PPIase FKBP-type" evidence="1">
    <location>
        <begin position="161"/>
        <end position="246"/>
    </location>
</feature>
<sequence>MQVSVETTEGLGRRVNITVTADSIEKAVESELRNVAKKARIDGFRKGKVPMNIVAQRYGASVRQDVLGDLMQRNFVDAIIKEKLNPVGAPKYVPGEYKLGEDFAYAVEFEVYPEIELKGLDTIVVEKPQVDVNDADVDAMIETLRKQQASWSVKEGEVGAEDRATIDFTGSIDGEAFEGGKATDFVLAMGQGRMIPGFEDGILGHKAGEEFVIDVTFPEDYHAENLKGKAAKFDIVLKKVEERELPEMTAEFIKRFGVADGSLDGLKAEVRKNMTRELKNAVRNRIKAQVLDGLVLANEIDVPAALVDGEIDVLRRQAAQRFGGNEQQAMELPRELFEEQAKRRVIVGLLLGEVISKSELKADDARVNALIEEMASAYEDPQEVIEFYSKNKELMNNMRNMALEEQAVEALLSQAQVSEKATTFNELMNQPQA</sequence>
<proteinExistence type="inferred from homology"/>
<gene>
    <name evidence="1" type="primary">tig</name>
    <name type="ordered locus">NT01EI_1077</name>
</gene>
<reference key="1">
    <citation type="submission" date="2009-03" db="EMBL/GenBank/DDBJ databases">
        <title>Complete genome sequence of Edwardsiella ictaluri 93-146.</title>
        <authorList>
            <person name="Williams M.L."/>
            <person name="Gillaspy A.F."/>
            <person name="Dyer D.W."/>
            <person name="Thune R.L."/>
            <person name="Waldbieser G.C."/>
            <person name="Schuster S.C."/>
            <person name="Gipson J."/>
            <person name="Zaitshik J."/>
            <person name="Landry C."/>
            <person name="Lawrence M.L."/>
        </authorList>
    </citation>
    <scope>NUCLEOTIDE SEQUENCE [LARGE SCALE GENOMIC DNA]</scope>
    <source>
        <strain>93-146</strain>
    </source>
</reference>
<protein>
    <recommendedName>
        <fullName evidence="1">Trigger factor</fullName>
        <shortName evidence="1">TF</shortName>
        <ecNumber evidence="1">5.2.1.8</ecNumber>
    </recommendedName>
    <alternativeName>
        <fullName evidence="1">PPIase</fullName>
    </alternativeName>
</protein>
<keyword id="KW-0131">Cell cycle</keyword>
<keyword id="KW-0132">Cell division</keyword>
<keyword id="KW-0143">Chaperone</keyword>
<keyword id="KW-0963">Cytoplasm</keyword>
<keyword id="KW-0413">Isomerase</keyword>
<keyword id="KW-0697">Rotamase</keyword>
<name>TIG_EDWI9</name>
<comment type="function">
    <text evidence="1">Involved in protein export. Acts as a chaperone by maintaining the newly synthesized protein in an open conformation. Functions as a peptidyl-prolyl cis-trans isomerase.</text>
</comment>
<comment type="catalytic activity">
    <reaction evidence="1">
        <text>[protein]-peptidylproline (omega=180) = [protein]-peptidylproline (omega=0)</text>
        <dbReference type="Rhea" id="RHEA:16237"/>
        <dbReference type="Rhea" id="RHEA-COMP:10747"/>
        <dbReference type="Rhea" id="RHEA-COMP:10748"/>
        <dbReference type="ChEBI" id="CHEBI:83833"/>
        <dbReference type="ChEBI" id="CHEBI:83834"/>
        <dbReference type="EC" id="5.2.1.8"/>
    </reaction>
</comment>
<comment type="subcellular location">
    <subcellularLocation>
        <location>Cytoplasm</location>
    </subcellularLocation>
    <text evidence="1">About half TF is bound to the ribosome near the polypeptide exit tunnel while the other half is free in the cytoplasm.</text>
</comment>
<comment type="domain">
    <text evidence="1">Consists of 3 domains; the N-terminus binds the ribosome, the middle domain has PPIase activity, while the C-terminus has intrinsic chaperone activity on its own.</text>
</comment>
<comment type="similarity">
    <text evidence="1">Belongs to the FKBP-type PPIase family. Tig subfamily.</text>
</comment>
<organism>
    <name type="scientific">Edwardsiella ictaluri (strain 93-146)</name>
    <dbReference type="NCBI Taxonomy" id="634503"/>
    <lineage>
        <taxon>Bacteria</taxon>
        <taxon>Pseudomonadati</taxon>
        <taxon>Pseudomonadota</taxon>
        <taxon>Gammaproteobacteria</taxon>
        <taxon>Enterobacterales</taxon>
        <taxon>Hafniaceae</taxon>
        <taxon>Edwardsiella</taxon>
    </lineage>
</organism>
<accession>C5BCJ5</accession>
<dbReference type="EC" id="5.2.1.8" evidence="1"/>
<dbReference type="EMBL" id="CP001600">
    <property type="protein sequence ID" value="ACR68289.1"/>
    <property type="molecule type" value="Genomic_DNA"/>
</dbReference>
<dbReference type="RefSeq" id="WP_015870470.1">
    <property type="nucleotide sequence ID" value="NZ_CP169062.1"/>
</dbReference>
<dbReference type="SMR" id="C5BCJ5"/>
<dbReference type="STRING" id="67780.B6E78_15755"/>
<dbReference type="GeneID" id="69538111"/>
<dbReference type="KEGG" id="eic:NT01EI_1077"/>
<dbReference type="PATRIC" id="fig|634503.3.peg.976"/>
<dbReference type="HOGENOM" id="CLU_033058_2_0_6"/>
<dbReference type="OrthoDB" id="9767721at2"/>
<dbReference type="Proteomes" id="UP000001485">
    <property type="component" value="Chromosome"/>
</dbReference>
<dbReference type="GO" id="GO:0005737">
    <property type="term" value="C:cytoplasm"/>
    <property type="evidence" value="ECO:0007669"/>
    <property type="project" value="UniProtKB-SubCell"/>
</dbReference>
<dbReference type="GO" id="GO:0003755">
    <property type="term" value="F:peptidyl-prolyl cis-trans isomerase activity"/>
    <property type="evidence" value="ECO:0007669"/>
    <property type="project" value="UniProtKB-UniRule"/>
</dbReference>
<dbReference type="GO" id="GO:0044183">
    <property type="term" value="F:protein folding chaperone"/>
    <property type="evidence" value="ECO:0007669"/>
    <property type="project" value="TreeGrafter"/>
</dbReference>
<dbReference type="GO" id="GO:0043022">
    <property type="term" value="F:ribosome binding"/>
    <property type="evidence" value="ECO:0007669"/>
    <property type="project" value="TreeGrafter"/>
</dbReference>
<dbReference type="GO" id="GO:0051083">
    <property type="term" value="P:'de novo' cotranslational protein folding"/>
    <property type="evidence" value="ECO:0007669"/>
    <property type="project" value="TreeGrafter"/>
</dbReference>
<dbReference type="GO" id="GO:0051301">
    <property type="term" value="P:cell division"/>
    <property type="evidence" value="ECO:0007669"/>
    <property type="project" value="UniProtKB-KW"/>
</dbReference>
<dbReference type="GO" id="GO:0061077">
    <property type="term" value="P:chaperone-mediated protein folding"/>
    <property type="evidence" value="ECO:0007669"/>
    <property type="project" value="TreeGrafter"/>
</dbReference>
<dbReference type="GO" id="GO:0015031">
    <property type="term" value="P:protein transport"/>
    <property type="evidence" value="ECO:0007669"/>
    <property type="project" value="UniProtKB-UniRule"/>
</dbReference>
<dbReference type="GO" id="GO:0043335">
    <property type="term" value="P:protein unfolding"/>
    <property type="evidence" value="ECO:0007669"/>
    <property type="project" value="TreeGrafter"/>
</dbReference>
<dbReference type="FunFam" id="3.10.50.40:FF:000001">
    <property type="entry name" value="Trigger factor"/>
    <property type="match status" value="1"/>
</dbReference>
<dbReference type="FunFam" id="3.30.70.1050:FF:000001">
    <property type="entry name" value="Trigger factor"/>
    <property type="match status" value="1"/>
</dbReference>
<dbReference type="Gene3D" id="3.10.50.40">
    <property type="match status" value="1"/>
</dbReference>
<dbReference type="Gene3D" id="3.30.70.1050">
    <property type="entry name" value="Trigger factor ribosome-binding domain"/>
    <property type="match status" value="1"/>
</dbReference>
<dbReference type="Gene3D" id="1.10.3120.10">
    <property type="entry name" value="Trigger factor, C-terminal domain"/>
    <property type="match status" value="1"/>
</dbReference>
<dbReference type="HAMAP" id="MF_00303">
    <property type="entry name" value="Trigger_factor_Tig"/>
    <property type="match status" value="1"/>
</dbReference>
<dbReference type="InterPro" id="IPR046357">
    <property type="entry name" value="PPIase_dom_sf"/>
</dbReference>
<dbReference type="InterPro" id="IPR001179">
    <property type="entry name" value="PPIase_FKBP_dom"/>
</dbReference>
<dbReference type="InterPro" id="IPR005215">
    <property type="entry name" value="Trig_fac"/>
</dbReference>
<dbReference type="InterPro" id="IPR008880">
    <property type="entry name" value="Trigger_fac_C"/>
</dbReference>
<dbReference type="InterPro" id="IPR037041">
    <property type="entry name" value="Trigger_fac_C_sf"/>
</dbReference>
<dbReference type="InterPro" id="IPR008881">
    <property type="entry name" value="Trigger_fac_ribosome-bd_bac"/>
</dbReference>
<dbReference type="InterPro" id="IPR036611">
    <property type="entry name" value="Trigger_fac_ribosome-bd_sf"/>
</dbReference>
<dbReference type="InterPro" id="IPR027304">
    <property type="entry name" value="Trigger_fact/SurA_dom_sf"/>
</dbReference>
<dbReference type="NCBIfam" id="TIGR00115">
    <property type="entry name" value="tig"/>
    <property type="match status" value="1"/>
</dbReference>
<dbReference type="PANTHER" id="PTHR30560">
    <property type="entry name" value="TRIGGER FACTOR CHAPERONE AND PEPTIDYL-PROLYL CIS/TRANS ISOMERASE"/>
    <property type="match status" value="1"/>
</dbReference>
<dbReference type="PANTHER" id="PTHR30560:SF3">
    <property type="entry name" value="TRIGGER FACTOR-LIKE PROTEIN TIG, CHLOROPLASTIC"/>
    <property type="match status" value="1"/>
</dbReference>
<dbReference type="Pfam" id="PF00254">
    <property type="entry name" value="FKBP_C"/>
    <property type="match status" value="1"/>
</dbReference>
<dbReference type="Pfam" id="PF05698">
    <property type="entry name" value="Trigger_C"/>
    <property type="match status" value="1"/>
</dbReference>
<dbReference type="Pfam" id="PF05697">
    <property type="entry name" value="Trigger_N"/>
    <property type="match status" value="1"/>
</dbReference>
<dbReference type="PIRSF" id="PIRSF003095">
    <property type="entry name" value="Trigger_factor"/>
    <property type="match status" value="1"/>
</dbReference>
<dbReference type="SUPFAM" id="SSF54534">
    <property type="entry name" value="FKBP-like"/>
    <property type="match status" value="1"/>
</dbReference>
<dbReference type="SUPFAM" id="SSF109998">
    <property type="entry name" value="Triger factor/SurA peptide-binding domain-like"/>
    <property type="match status" value="1"/>
</dbReference>
<dbReference type="SUPFAM" id="SSF102735">
    <property type="entry name" value="Trigger factor ribosome-binding domain"/>
    <property type="match status" value="1"/>
</dbReference>
<dbReference type="PROSITE" id="PS50059">
    <property type="entry name" value="FKBP_PPIASE"/>
    <property type="match status" value="1"/>
</dbReference>
<evidence type="ECO:0000255" key="1">
    <source>
        <dbReference type="HAMAP-Rule" id="MF_00303"/>
    </source>
</evidence>